<gene>
    <name evidence="2" type="primary">RPL34B</name>
    <name type="ordered locus">orf19.6220.4</name>
    <name type="ORF">CAALFM_C106890CA</name>
</gene>
<keyword id="KW-0002">3D-structure</keyword>
<keyword id="KW-0963">Cytoplasm</keyword>
<keyword id="KW-1185">Reference proteome</keyword>
<keyword id="KW-0687">Ribonucleoprotein</keyword>
<keyword id="KW-0689">Ribosomal protein</keyword>
<name>RL34B_CANAL</name>
<sequence length="122" mass="13739">MAQRVTYRRRNPYNTRSNKIKVVKTPGGKLVAQHVKKAASRVKCGDCGSALAGISTLRPRQYAQVSKTHKTVQRAYGGSRCANCVKERIVRAFLIEEQKIVKRVLKEQQDKEKKAAKKTGKK</sequence>
<feature type="chain" id="PRO_0000456506" description="Large ribosomal subunit protein eL34">
    <location>
        <begin position="1"/>
        <end position="122"/>
    </location>
</feature>
<dbReference type="EMBL" id="CP017623">
    <property type="protein sequence ID" value="AOW26343.1"/>
    <property type="molecule type" value="Genomic_DNA"/>
</dbReference>
<dbReference type="RefSeq" id="XP_019330665.1">
    <property type="nucleotide sequence ID" value="XM_019475120.1"/>
</dbReference>
<dbReference type="PDB" id="7PZY">
    <property type="method" value="EM"/>
    <property type="resolution" value="2.32 A"/>
    <property type="chains" value="AH=1-122"/>
</dbReference>
<dbReference type="PDB" id="7Q08">
    <property type="method" value="EM"/>
    <property type="resolution" value="2.56 A"/>
    <property type="chains" value="AH=1-122"/>
</dbReference>
<dbReference type="PDB" id="7Q0F">
    <property type="method" value="EM"/>
    <property type="resolution" value="2.64 A"/>
    <property type="chains" value="AH=1-122"/>
</dbReference>
<dbReference type="PDB" id="7Q0P">
    <property type="method" value="EM"/>
    <property type="resolution" value="2.77 A"/>
    <property type="chains" value="AH=1-122"/>
</dbReference>
<dbReference type="PDB" id="7Q0R">
    <property type="method" value="EM"/>
    <property type="resolution" value="2.67 A"/>
    <property type="chains" value="AH=1-122"/>
</dbReference>
<dbReference type="PDB" id="8C3A">
    <property type="method" value="X-ray"/>
    <property type="resolution" value="3.00 A"/>
    <property type="chains" value="AH/CB=1-122"/>
</dbReference>
<dbReference type="PDB" id="8OGJ">
    <property type="method" value="EM"/>
    <property type="resolution" value="3.10 A"/>
    <property type="chains" value="AH=1-122"/>
</dbReference>
<dbReference type="PDB" id="8OH6">
    <property type="method" value="X-ray"/>
    <property type="resolution" value="3.35 A"/>
    <property type="chains" value="AH/CB=1-122"/>
</dbReference>
<dbReference type="PDB" id="8OI5">
    <property type="method" value="X-ray"/>
    <property type="resolution" value="2.90 A"/>
    <property type="chains" value="AH/CB=1-122"/>
</dbReference>
<dbReference type="PDB" id="8OJ3">
    <property type="method" value="X-ray"/>
    <property type="resolution" value="3.50 A"/>
    <property type="chains" value="AH/CB=1-122"/>
</dbReference>
<dbReference type="PDBsum" id="7PZY"/>
<dbReference type="PDBsum" id="7Q08"/>
<dbReference type="PDBsum" id="7Q0F"/>
<dbReference type="PDBsum" id="7Q0P"/>
<dbReference type="PDBsum" id="7Q0R"/>
<dbReference type="PDBsum" id="8C3A"/>
<dbReference type="PDBsum" id="8OGJ"/>
<dbReference type="PDBsum" id="8OH6"/>
<dbReference type="PDBsum" id="8OI5"/>
<dbReference type="PDBsum" id="8OJ3"/>
<dbReference type="SMR" id="A0A1D8PDZ1"/>
<dbReference type="FunCoup" id="A0A1D8PDZ1">
    <property type="interactions" value="962"/>
</dbReference>
<dbReference type="STRING" id="237561.A0A1D8PDZ1"/>
<dbReference type="EnsemblFungi" id="C1_06890C_A-T">
    <property type="protein sequence ID" value="C1_06890C_A-T-p1"/>
    <property type="gene ID" value="C1_06890C_A"/>
</dbReference>
<dbReference type="GeneID" id="30515014"/>
<dbReference type="KEGG" id="cal:CAALFM_C106890CA"/>
<dbReference type="CGD" id="CAL0000185373">
    <property type="gene designation" value="orf19.6220.4"/>
</dbReference>
<dbReference type="VEuPathDB" id="FungiDB:C1_06890C_A"/>
<dbReference type="eggNOG" id="KOG1790">
    <property type="taxonomic scope" value="Eukaryota"/>
</dbReference>
<dbReference type="InParanoid" id="A0A1D8PDZ1"/>
<dbReference type="OMA" id="RCHKCVR"/>
<dbReference type="OrthoDB" id="277449at2759"/>
<dbReference type="Proteomes" id="UP000000559">
    <property type="component" value="Chromosome 1"/>
</dbReference>
<dbReference type="GO" id="GO:0022625">
    <property type="term" value="C:cytosolic large ribosomal subunit"/>
    <property type="evidence" value="ECO:0000318"/>
    <property type="project" value="GO_Central"/>
</dbReference>
<dbReference type="GO" id="GO:0003735">
    <property type="term" value="F:structural constituent of ribosome"/>
    <property type="evidence" value="ECO:0000318"/>
    <property type="project" value="GO_Central"/>
</dbReference>
<dbReference type="GO" id="GO:0042254">
    <property type="term" value="P:ribosome biogenesis"/>
    <property type="evidence" value="ECO:0000318"/>
    <property type="project" value="GO_Central"/>
</dbReference>
<dbReference type="GO" id="GO:0006412">
    <property type="term" value="P:translation"/>
    <property type="evidence" value="ECO:0007669"/>
    <property type="project" value="InterPro"/>
</dbReference>
<dbReference type="Gene3D" id="6.20.340.10">
    <property type="match status" value="1"/>
</dbReference>
<dbReference type="Gene3D" id="6.20.370.70">
    <property type="match status" value="1"/>
</dbReference>
<dbReference type="InterPro" id="IPR008195">
    <property type="entry name" value="Ribosomal_eL34"/>
</dbReference>
<dbReference type="InterPro" id="IPR038562">
    <property type="entry name" value="Ribosomal_eL34_C_sf"/>
</dbReference>
<dbReference type="InterPro" id="IPR018065">
    <property type="entry name" value="Ribosomal_eL34_CS"/>
</dbReference>
<dbReference type="PANTHER" id="PTHR10759">
    <property type="entry name" value="60S RIBOSOMAL PROTEIN L34"/>
    <property type="match status" value="1"/>
</dbReference>
<dbReference type="Pfam" id="PF01199">
    <property type="entry name" value="Ribosomal_L34e"/>
    <property type="match status" value="1"/>
</dbReference>
<dbReference type="PRINTS" id="PR01250">
    <property type="entry name" value="RIBOSOMALL34"/>
</dbReference>
<dbReference type="PROSITE" id="PS01145">
    <property type="entry name" value="RIBOSOMAL_L34E"/>
    <property type="match status" value="1"/>
</dbReference>
<organism>
    <name type="scientific">Candida albicans (strain SC5314 / ATCC MYA-2876)</name>
    <name type="common">Yeast</name>
    <dbReference type="NCBI Taxonomy" id="237561"/>
    <lineage>
        <taxon>Eukaryota</taxon>
        <taxon>Fungi</taxon>
        <taxon>Dikarya</taxon>
        <taxon>Ascomycota</taxon>
        <taxon>Saccharomycotina</taxon>
        <taxon>Pichiomycetes</taxon>
        <taxon>Debaryomycetaceae</taxon>
        <taxon>Candida/Lodderomyces clade</taxon>
        <taxon>Candida</taxon>
    </lineage>
</organism>
<proteinExistence type="evidence at protein level"/>
<comment type="function">
    <text evidence="4">Component of the ribosome, a large ribonucleoprotein complex responsible for the synthesis of proteins in the cell. The small ribosomal subunit (SSU) binds messenger RNAs (mRNAs) and translates the encoded message by selecting cognate aminoacyl-transfer RNA (tRNA) molecules. The large subunit (LSU) contains the ribosomal catalytic site termed the peptidyl transferase center (PTC), which catalyzes the formation of peptide bonds, thereby polymerizing the amino acids delivered by tRNAs into a polypeptide chain. The nascent polypeptides leave the ribosome through a tunnel in the LSU and interact with protein factors that function in enzymatic processing, targeting, and the membrane insertion of nascent chains at the exit of the ribosomal tunnel.</text>
</comment>
<comment type="subunit">
    <text evidence="1">Component of the large ribosomal subunit (PubMed:35613268). Mature ribosomes consist of a small (40S) and a large (60S) subunit (PubMed:35613268). The 40S subunit contains about 32 different proteins and 1 molecule of RNA (18S) (PubMed:35613268). The 60S subunit contains 45 different proteins and 3 molecules of RNA (25S, 5.8S and 5S) (PubMed:35613268).</text>
</comment>
<comment type="subcellular location">
    <subcellularLocation>
        <location evidence="4">Cytoplasm</location>
    </subcellularLocation>
</comment>
<comment type="similarity">
    <text evidence="3">Belongs to the eukaryotic ribosomal protein eL34 family.</text>
</comment>
<accession>A0A1D8PDZ1</accession>
<evidence type="ECO:0000269" key="1">
    <source>
    </source>
</evidence>
<evidence type="ECO:0000303" key="2">
    <source>
    </source>
</evidence>
<evidence type="ECO:0000305" key="3"/>
<evidence type="ECO:0000305" key="4">
    <source>
    </source>
</evidence>
<evidence type="ECO:0007744" key="5">
    <source>
        <dbReference type="PDB" id="7PZY"/>
    </source>
</evidence>
<evidence type="ECO:0007744" key="6">
    <source>
        <dbReference type="PDB" id="7Q0F"/>
    </source>
</evidence>
<evidence type="ECO:0007744" key="7">
    <source>
        <dbReference type="PDB" id="7Q0P"/>
    </source>
</evidence>
<reference key="1">
    <citation type="journal article" date="2004" name="Proc. Natl. Acad. Sci. U.S.A.">
        <title>The diploid genome sequence of Candida albicans.</title>
        <authorList>
            <person name="Jones T."/>
            <person name="Federspiel N.A."/>
            <person name="Chibana H."/>
            <person name="Dungan J."/>
            <person name="Kalman S."/>
            <person name="Magee B.B."/>
            <person name="Newport G."/>
            <person name="Thorstenson Y.R."/>
            <person name="Agabian N."/>
            <person name="Magee P.T."/>
            <person name="Davis R.W."/>
            <person name="Scherer S."/>
        </authorList>
    </citation>
    <scope>NUCLEOTIDE SEQUENCE [LARGE SCALE GENOMIC DNA]</scope>
    <source>
        <strain>SC5314 / ATCC MYA-2876</strain>
    </source>
</reference>
<reference key="2">
    <citation type="journal article" date="2007" name="Genome Biol.">
        <title>Assembly of the Candida albicans genome into sixteen supercontigs aligned on the eight chromosomes.</title>
        <authorList>
            <person name="van het Hoog M."/>
            <person name="Rast T.J."/>
            <person name="Martchenko M."/>
            <person name="Grindle S."/>
            <person name="Dignard D."/>
            <person name="Hogues H."/>
            <person name="Cuomo C."/>
            <person name="Berriman M."/>
            <person name="Scherer S."/>
            <person name="Magee B.B."/>
            <person name="Whiteway M."/>
            <person name="Chibana H."/>
            <person name="Nantel A."/>
            <person name="Magee P.T."/>
        </authorList>
    </citation>
    <scope>GENOME REANNOTATION</scope>
    <source>
        <strain>SC5314 / ATCC MYA-2876</strain>
    </source>
</reference>
<reference key="3">
    <citation type="journal article" date="2013" name="Genome Biol.">
        <title>Assembly of a phased diploid Candida albicans genome facilitates allele-specific measurements and provides a simple model for repeat and indel structure.</title>
        <authorList>
            <person name="Muzzey D."/>
            <person name="Schwartz K."/>
            <person name="Weissman J.S."/>
            <person name="Sherlock G."/>
        </authorList>
    </citation>
    <scope>NUCLEOTIDE SEQUENCE [LARGE SCALE GENOMIC DNA]</scope>
    <scope>GENOME REANNOTATION</scope>
    <source>
        <strain>SC5314 / ATCC MYA-2876</strain>
    </source>
</reference>
<reference evidence="5 6 7" key="4">
    <citation type="journal article" date="2022" name="Sci. Adv.">
        <title>E-site drug specificity of the human pathogen Candida albicans ribosome.</title>
        <authorList>
            <person name="Zgadzay Y."/>
            <person name="Kolosova O."/>
            <person name="Stetsenko A."/>
            <person name="Wu C."/>
            <person name="Bruchlen D."/>
            <person name="Usachev K."/>
            <person name="Validov S."/>
            <person name="Jenner L."/>
            <person name="Rogachev A."/>
            <person name="Yusupova G."/>
            <person name="Sachs M.S."/>
            <person name="Guskov A."/>
            <person name="Yusupov M."/>
        </authorList>
    </citation>
    <scope>STRUCTURE BY ELECTRON MICROSCOPY (2.32 ANGSTROMS) OF THE 80S RIBOSOME</scope>
    <scope>SUBUNIT</scope>
</reference>
<protein>
    <recommendedName>
        <fullName evidence="2">Large ribosomal subunit protein eL34</fullName>
    </recommendedName>
    <alternativeName>
        <fullName>60S ribosomal protein L34-B</fullName>
    </alternativeName>
</protein>